<keyword id="KW-0002">3D-structure</keyword>
<keyword id="KW-0178">Competence</keyword>
<keyword id="KW-0963">Cytoplasm</keyword>
<keyword id="KW-0903">Direct protein sequencing</keyword>
<keyword id="KW-0238">DNA-binding</keyword>
<keyword id="KW-1185">Reference proteome</keyword>
<name>DPRA_STRR6</name>
<dbReference type="EMBL" id="AE007317">
    <property type="protein sequence ID" value="AAK99947.1"/>
    <property type="status" value="ALT_INIT"/>
    <property type="molecule type" value="Genomic_DNA"/>
</dbReference>
<dbReference type="PIR" id="A95147">
    <property type="entry name" value="A95147"/>
</dbReference>
<dbReference type="PIR" id="G98014">
    <property type="entry name" value="G98014"/>
</dbReference>
<dbReference type="RefSeq" id="NP_358737.1">
    <property type="nucleotide sequence ID" value="NC_003098.1"/>
</dbReference>
<dbReference type="RefSeq" id="WP_000705306.1">
    <property type="nucleotide sequence ID" value="NC_003098.1"/>
</dbReference>
<dbReference type="PDB" id="3UQZ">
    <property type="method" value="X-ray"/>
    <property type="resolution" value="2.70 A"/>
    <property type="chains" value="A/B/C=1-282"/>
</dbReference>
<dbReference type="PDBsum" id="3UQZ"/>
<dbReference type="SMR" id="Q8DPI7"/>
<dbReference type="STRING" id="171101.spr1144"/>
<dbReference type="KEGG" id="spr:spr1144"/>
<dbReference type="PATRIC" id="fig|171101.6.peg.1242"/>
<dbReference type="eggNOG" id="COG0758">
    <property type="taxonomic scope" value="Bacteria"/>
</dbReference>
<dbReference type="HOGENOM" id="CLU_029601_3_3_9"/>
<dbReference type="PHI-base" id="PHI:11059"/>
<dbReference type="Proteomes" id="UP000000586">
    <property type="component" value="Chromosome"/>
</dbReference>
<dbReference type="GO" id="GO:0005737">
    <property type="term" value="C:cytoplasm"/>
    <property type="evidence" value="ECO:0007669"/>
    <property type="project" value="UniProtKB-SubCell"/>
</dbReference>
<dbReference type="GO" id="GO:0003677">
    <property type="term" value="F:DNA binding"/>
    <property type="evidence" value="ECO:0007669"/>
    <property type="project" value="UniProtKB-KW"/>
</dbReference>
<dbReference type="GO" id="GO:0030420">
    <property type="term" value="P:establishment of competence for transformation"/>
    <property type="evidence" value="ECO:0000315"/>
    <property type="project" value="UniProtKB"/>
</dbReference>
<dbReference type="FunFam" id="3.40.50.450:FF:000023">
    <property type="entry name" value="DNA processing protein DprA"/>
    <property type="match status" value="1"/>
</dbReference>
<dbReference type="Gene3D" id="3.40.50.450">
    <property type="match status" value="1"/>
</dbReference>
<dbReference type="InterPro" id="IPR003488">
    <property type="entry name" value="DprA"/>
</dbReference>
<dbReference type="InterPro" id="IPR041104">
    <property type="entry name" value="SAM_DprA"/>
</dbReference>
<dbReference type="NCBIfam" id="TIGR00732">
    <property type="entry name" value="dprA"/>
    <property type="match status" value="1"/>
</dbReference>
<dbReference type="PANTHER" id="PTHR43022">
    <property type="entry name" value="PROTEIN SMF"/>
    <property type="match status" value="1"/>
</dbReference>
<dbReference type="PANTHER" id="PTHR43022:SF1">
    <property type="entry name" value="PROTEIN SMF"/>
    <property type="match status" value="1"/>
</dbReference>
<dbReference type="Pfam" id="PF02481">
    <property type="entry name" value="DNA_processg_A"/>
    <property type="match status" value="1"/>
</dbReference>
<dbReference type="Pfam" id="PF18255">
    <property type="entry name" value="SAM_DprA"/>
    <property type="match status" value="1"/>
</dbReference>
<dbReference type="SUPFAM" id="SSF102405">
    <property type="entry name" value="MCP/YpsA-like"/>
    <property type="match status" value="1"/>
</dbReference>
<reference key="1">
    <citation type="journal article" date="2001" name="J. Bacteriol.">
        <title>Genome of the bacterium Streptococcus pneumoniae strain R6.</title>
        <authorList>
            <person name="Hoskins J."/>
            <person name="Alborn W.E. Jr."/>
            <person name="Arnold J."/>
            <person name="Blaszczak L.C."/>
            <person name="Burgett S."/>
            <person name="DeHoff B.S."/>
            <person name="Estrem S.T."/>
            <person name="Fritz L."/>
            <person name="Fu D.-J."/>
            <person name="Fuller W."/>
            <person name="Geringer C."/>
            <person name="Gilmour R."/>
            <person name="Glass J.S."/>
            <person name="Khoja H."/>
            <person name="Kraft A.R."/>
            <person name="Lagace R.E."/>
            <person name="LeBlanc D.J."/>
            <person name="Lee L.N."/>
            <person name="Lefkowitz E.J."/>
            <person name="Lu J."/>
            <person name="Matsushima P."/>
            <person name="McAhren S.M."/>
            <person name="McHenney M."/>
            <person name="McLeaster K."/>
            <person name="Mundy C.W."/>
            <person name="Nicas T.I."/>
            <person name="Norris F.H."/>
            <person name="O'Gara M."/>
            <person name="Peery R.B."/>
            <person name="Robertson G.T."/>
            <person name="Rockey P."/>
            <person name="Sun P.-M."/>
            <person name="Winkler M.E."/>
            <person name="Yang Y."/>
            <person name="Young-Bellido M."/>
            <person name="Zhao G."/>
            <person name="Zook C.A."/>
            <person name="Baltz R.H."/>
            <person name="Jaskunas S.R."/>
            <person name="Rosteck P.R. Jr."/>
            <person name="Skatrud P.L."/>
            <person name="Glass J.I."/>
        </authorList>
    </citation>
    <scope>NUCLEOTIDE SEQUENCE [LARGE SCALE GENOMIC DNA]</scope>
    <source>
        <strain>ATCC BAA-255 / R6</strain>
    </source>
</reference>
<reference key="2">
    <citation type="journal article" date="2007" name="Cell">
        <title>A key presynaptic role in transformation for a widespread bacterial protein: DprA conveys incoming ssDNA to RecA.</title>
        <authorList>
            <person name="Mortier-Barriere I."/>
            <person name="Velten M."/>
            <person name="Dupaigne P."/>
            <person name="Mirouze N."/>
            <person name="Pietrement O."/>
            <person name="McGovern S."/>
            <person name="Fichant G."/>
            <person name="Martin B."/>
            <person name="Noirot P."/>
            <person name="Le Cam E."/>
            <person name="Polard P."/>
            <person name="Claverys J.P."/>
        </authorList>
    </citation>
    <scope>PROTEIN SEQUENCE OF 1-6</scope>
    <scope>FUNCTION</scope>
    <scope>INTERACTION WITH RECA</scope>
    <scope>SUBUNIT</scope>
    <scope>DNA-BINDING</scope>
    <source>
        <strain>R6 / R800</strain>
    </source>
</reference>
<reference key="3">
    <citation type="journal article" date="1998" name="Mol. Microbiol.">
        <title>A competence regulon in Streptococcus pneumoniae revealed by genomic analysis.</title>
        <authorList>
            <person name="Campbell E.A."/>
            <person name="Choi S.Y."/>
            <person name="Masure H.R."/>
        </authorList>
    </citation>
    <scope>FUNCTION</scope>
    <scope>INDUCTION</scope>
    <scope>DISRUPTION PHENOTYPE</scope>
    <source>
        <strain>ATCC BAA-255 / R6</strain>
    </source>
</reference>
<reference key="4">
    <citation type="journal article" date="1999" name="Appl. Environ. Microbiol.">
        <title>Construction and analysis of a library for random insertional mutagenesis in Streptococcus pneumoniae: use for recovery of mutants defective in genetic transformation and for identification of essential genes.</title>
        <authorList>
            <person name="Lee M.S."/>
            <person name="Dougherty B.A."/>
            <person name="Madeo A.C."/>
            <person name="Morrison D.A."/>
        </authorList>
    </citation>
    <scope>FUNCTION</scope>
    <scope>DISRUPTION PHENOTYPE</scope>
    <source>
        <strain>CP1500</strain>
    </source>
</reference>
<reference key="5">
    <citation type="journal article" date="2002" name="Mol. Microbiol.">
        <title>Uptake of transforming DNA in Gram-positive bacteria: a view from Streptococcus pneumoniae.</title>
        <authorList>
            <person name="Berge M."/>
            <person name="Moscoso M."/>
            <person name="Prudhomme M."/>
            <person name="Martin B."/>
            <person name="Claverys J.P."/>
        </authorList>
    </citation>
    <scope>FUNCTION</scope>
    <scope>DISRUPTION PHENOTYPE</scope>
    <source>
        <strain>R6 / R800</strain>
    </source>
</reference>
<reference key="6">
    <citation type="journal article" date="2003" name="Mol. Microbiol.">
        <title>Transformation of Streptococcus pneumoniae relies on DprA- and RecA-dependent protection of incoming DNA single strands.</title>
        <authorList>
            <person name="Berge M."/>
            <person name="Mortier-Barriere I."/>
            <person name="Martin B."/>
            <person name="Claverys J.P."/>
        </authorList>
    </citation>
    <scope>FUNCTION</scope>
    <scope>DISRUPTION PHENOTYPE</scope>
    <source>
        <strain>R6 / R800</strain>
    </source>
</reference>
<reference key="7">
    <citation type="journal article" date="2012" name="Proc. Natl. Acad. Sci. U.S.A.">
        <title>Structure-function analysis of pneumococcal DprA protein reveals that dimerization is crucial for loading RecA recombinase onto DNA during transformation.</title>
        <authorList>
            <person name="Quevillon-Cheruel S."/>
            <person name="Campo N."/>
            <person name="Mirouze N."/>
            <person name="Mortier-Barriere I."/>
            <person name="Brooks M.A."/>
            <person name="Boudes M."/>
            <person name="Durand D."/>
            <person name="Soulet A.L."/>
            <person name="Lisboa J."/>
            <person name="Noirot P."/>
            <person name="Martin B."/>
            <person name="van Tilbeurgh H."/>
            <person name="Noirot-Gros M.F."/>
            <person name="Claverys J.P."/>
            <person name="Polard P."/>
        </authorList>
    </citation>
    <scope>X-RAY CRYSTALLOGRAPHY (2.70 ANGSTROMS)</scope>
    <scope>FUNCTION</scope>
    <scope>SUBUNIT</scope>
    <scope>DOMAIN</scope>
    <scope>MUTAGENESIS OF 235-GLN--ASP-243; 251-ILE--HIS-260 AND 260-HIS--LEU-269</scope>
    <scope>DNA-BINDING</scope>
    <source>
        <strain>R6 / R800</strain>
    </source>
</reference>
<reference key="8">
    <citation type="journal article" date="2017" name="Mol. Microbiol.">
        <title>Bacterial transformation: ComFA is a DNA-dependent ATPase that forms complexes with ComFC and DprA.</title>
        <authorList>
            <person name="Diallo A."/>
            <person name="Foster H.R."/>
            <person name="Gromek K.A."/>
            <person name="Perry T.N."/>
            <person name="Dujeancourt A."/>
            <person name="Krasteva P.V."/>
            <person name="Gubellini F."/>
            <person name="Falbel T.G."/>
            <person name="Burton B.M."/>
            <person name="Fronzes R."/>
        </authorList>
    </citation>
    <scope>INTERACTION WITH COMFA</scope>
    <scope>SUBUNIT</scope>
    <source>
        <strain>R6 / R800</strain>
    </source>
</reference>
<sequence length="282" mass="31063">MKITNYEIYKLKKSGLTNQQILKVLEYGENVDQELLLGDIADISGCRNPAVFMERYFQIDDAHLSKEFQKFPSFSILDDCYPWDLSEIYDAPVLLFYKGNLDLLKFPKVAVVGSRACSKQGAKSVEKVIQGLENELVIVSGLAKGIDTAAHMAALQNGGKTIAVIGTGLDVFYPKANKRLQDYIGNDHLVLSEYGPGEQPLKFHFPARNRIIAGLCRGVIVAEAKMRSGSLITCERAMEEGRDVFAIPGSILDGLSDGCHHLIQEGAKLVTSGQDVLAEFEF</sequence>
<evidence type="ECO:0000250" key="1">
    <source>
        <dbReference type="UniProtKB" id="P39813"/>
    </source>
</evidence>
<evidence type="ECO:0000269" key="2">
    <source>
    </source>
</evidence>
<evidence type="ECO:0000269" key="3">
    <source>
    </source>
</evidence>
<evidence type="ECO:0000269" key="4">
    <source>
    </source>
</evidence>
<evidence type="ECO:0000269" key="5">
    <source>
    </source>
</evidence>
<evidence type="ECO:0000269" key="6">
    <source>
    </source>
</evidence>
<evidence type="ECO:0000269" key="7">
    <source>
    </source>
</evidence>
<evidence type="ECO:0000269" key="8">
    <source>
    </source>
</evidence>
<evidence type="ECO:0000303" key="9">
    <source>
    </source>
</evidence>
<evidence type="ECO:0000303" key="10">
    <source>
    </source>
</evidence>
<evidence type="ECO:0000303" key="11">
    <source>
    </source>
</evidence>
<evidence type="ECO:0000303" key="12">
    <source>
    </source>
</evidence>
<evidence type="ECO:0000305" key="13"/>
<evidence type="ECO:0000305" key="14">
    <source>
    </source>
</evidence>
<evidence type="ECO:0000305" key="15">
    <source>
    </source>
</evidence>
<comment type="function">
    <text evidence="2 3 4 5 6 8">Protein that helps load RecA onto ssDNA during transformation (PubMed:17803906, PubMed:22904190). Required for DNA transformation (PubMed:10223974, PubMed:12123453, PubMed:9535083). Not required for DNA uptake but for a later stage of transformation (PubMed:12123453). Thought to interact at the cell pole with newly imported transforming ssDNA which it binds cooperatively, protecting linear and circular ssDNA from nuclease action (PubMed:14617176, PubMed:17803906). Forms bridges between DNA segments (PubMed:17803906). Favors the loading of RecA onto ssDNA and formation of RecA-DNA filaments, triggering RecA-catalysis of ATP-driven homologous DNA pairing (PubMed:17803906).</text>
</comment>
<comment type="subunit">
    <text evidence="6 7 14">Homodimer; forms tail-to-tail dimers, forms nucleoprotein complex (NPC) which requires at least 30 nucleotides (nt) of ssDNA becoming optimal with 50 nt (PubMed:22904190). Interacts with RecA, forms mixed DprA-RecA-ssDNA filaments (PubMed:17803906). Interacts with ComFA and ComFC (PubMed:28618091).</text>
</comment>
<comment type="subcellular location">
    <subcellularLocation>
        <location evidence="1">Cytoplasm</location>
    </subcellularLocation>
    <text evidence="1">Localizes to the cell poles during competence (By similarity).</text>
</comment>
<comment type="induction">
    <text evidence="8">Expressed under conditions that induce DNA competence (PubMed:9535083).</text>
</comment>
<comment type="domain">
    <text evidence="15">The regions responsible for dimerization and for DprA-RecA interaction partially overlap, it is suggested that when RecA interacts with the DprA-ssDNA NPC it rearranges or disrupts the DprA dimer, leading to nucleation of RecA on ssDNA (PubMed:22904190).</text>
</comment>
<comment type="disruption phenotype">
    <text evidence="2 3 4 8">Loss of transformation (PubMed:10223974, PubMed:12123453, PubMed:14617176, PubMed:9535083). Imported DNA is very rapidly degraded (PubMed:14617176).</text>
</comment>
<comment type="similarity">
    <text evidence="13">Belongs to the DprA/Smf family.</text>
</comment>
<comment type="sequence caution" evidence="13">
    <conflict type="erroneous initiation">
        <sequence resource="EMBL-CDS" id="AAK99947"/>
    </conflict>
    <text>Extended N-terminus.</text>
</comment>
<protein>
    <recommendedName>
        <fullName evidence="11">DNA processing protein DprA</fullName>
    </recommendedName>
</protein>
<organism>
    <name type="scientific">Streptococcus pneumoniae (strain ATCC BAA-255 / R6)</name>
    <dbReference type="NCBI Taxonomy" id="171101"/>
    <lineage>
        <taxon>Bacteria</taxon>
        <taxon>Bacillati</taxon>
        <taxon>Bacillota</taxon>
        <taxon>Bacilli</taxon>
        <taxon>Lactobacillales</taxon>
        <taxon>Streptococcaceae</taxon>
        <taxon>Streptococcus</taxon>
    </lineage>
</organism>
<accession>Q8DPI7</accession>
<gene>
    <name evidence="10 11" type="primary">dprA</name>
    <name evidence="12" type="synonym">cilB</name>
    <name evidence="9" type="synonym">dal</name>
    <name type="synonym">smf</name>
    <name type="ordered locus">spr1144</name>
</gene>
<proteinExistence type="evidence at protein level"/>
<feature type="chain" id="PRO_0000437126" description="DNA processing protein DprA">
    <location>
        <begin position="1"/>
        <end position="282"/>
    </location>
</feature>
<feature type="mutagenesis site" description="Forms dimers, forms NPC with ssDNA, 5-fold decreased binding to RecA, 150-fold less efficient transformation." evidence="6">
    <original>ERAMEEGRDVFAIPGSILDGLSDGCHHLIQE</original>
    <variation>QRAMEEGRNVFAIPGSILDGLSDGCHHLIQQ</variation>
    <location>
        <begin position="235"/>
        <end position="265"/>
    </location>
</feature>
<feature type="mutagenesis site" description="Forms dimers, forms nucleoprotein complex with ssDNA (NPC), 1.5-fold decreased binding to RecA, 8-fold less efficient transformation." evidence="6">
    <original>ERAMEEGRD</original>
    <variation>QRAMEEGRN</variation>
    <location>
        <begin position="235"/>
        <end position="243"/>
    </location>
</feature>
<feature type="mutagenesis site" description="Partially able to dimerize, 180-fold less efficient transformation, interacts with RecA." evidence="6">
    <original>ILDGLSDGCH</original>
    <variation>VLDGLSDGCR</variation>
    <location>
        <begin position="251"/>
        <end position="260"/>
    </location>
</feature>
<feature type="mutagenesis site" description="No longer dimerizes." evidence="6">
    <original>HHLIQEGAKL</original>
    <variation>AHLIQEGAKK</variation>
    <location>
        <begin position="260"/>
        <end position="269"/>
    </location>
</feature>
<feature type="mutagenesis site" description="No longer dimerizes, 180-fold less efficient transformation, interacts with RecA, binds ssDNA but no longer forms NPC via dimerization." evidence="6">
    <original>HHLIQEGAKL</original>
    <variation>AHLIQEGAKR</variation>
    <location>
        <begin position="260"/>
        <end position="269"/>
    </location>
</feature>